<name>NADD_SHIDS</name>
<organism>
    <name type="scientific">Shigella dysenteriae serotype 1 (strain Sd197)</name>
    <dbReference type="NCBI Taxonomy" id="300267"/>
    <lineage>
        <taxon>Bacteria</taxon>
        <taxon>Pseudomonadati</taxon>
        <taxon>Pseudomonadota</taxon>
        <taxon>Gammaproteobacteria</taxon>
        <taxon>Enterobacterales</taxon>
        <taxon>Enterobacteriaceae</taxon>
        <taxon>Shigella</taxon>
    </lineage>
</organism>
<accession>Q32IU2</accession>
<reference key="1">
    <citation type="journal article" date="2005" name="Nucleic Acids Res.">
        <title>Genome dynamics and diversity of Shigella species, the etiologic agents of bacillary dysentery.</title>
        <authorList>
            <person name="Yang F."/>
            <person name="Yang J."/>
            <person name="Zhang X."/>
            <person name="Chen L."/>
            <person name="Jiang Y."/>
            <person name="Yan Y."/>
            <person name="Tang X."/>
            <person name="Wang J."/>
            <person name="Xiong Z."/>
            <person name="Dong J."/>
            <person name="Xue Y."/>
            <person name="Zhu Y."/>
            <person name="Xu X."/>
            <person name="Sun L."/>
            <person name="Chen S."/>
            <person name="Nie H."/>
            <person name="Peng J."/>
            <person name="Xu J."/>
            <person name="Wang Y."/>
            <person name="Yuan Z."/>
            <person name="Wen Y."/>
            <person name="Yao Z."/>
            <person name="Shen Y."/>
            <person name="Qiang B."/>
            <person name="Hou Y."/>
            <person name="Yu J."/>
            <person name="Jin Q."/>
        </authorList>
    </citation>
    <scope>NUCLEOTIDE SEQUENCE [LARGE SCALE GENOMIC DNA]</scope>
    <source>
        <strain>Sd197</strain>
    </source>
</reference>
<gene>
    <name evidence="1" type="primary">nadD</name>
    <name type="ordered locus">SDY_0561</name>
</gene>
<proteinExistence type="inferred from homology"/>
<keyword id="KW-0067">ATP-binding</keyword>
<keyword id="KW-0520">NAD</keyword>
<keyword id="KW-0547">Nucleotide-binding</keyword>
<keyword id="KW-0548">Nucleotidyltransferase</keyword>
<keyword id="KW-0662">Pyridine nucleotide biosynthesis</keyword>
<keyword id="KW-1185">Reference proteome</keyword>
<keyword id="KW-0808">Transferase</keyword>
<feature type="chain" id="PRO_0000310146" description="Probable nicotinate-nucleotide adenylyltransferase">
    <location>
        <begin position="1"/>
        <end position="213"/>
    </location>
</feature>
<evidence type="ECO:0000255" key="1">
    <source>
        <dbReference type="HAMAP-Rule" id="MF_00244"/>
    </source>
</evidence>
<sequence>MKSLQALFGGTFDPVHYGHLKPVETLANLIGLTRVTIIPNNVPPHRPQPEANSVQRKHMLELAIADKPLFTLDERELKRNAPSYTAQTLKEWRQEQGPDVPLAFIIGQDSLLTFPTWYEYETILDNAHLIVCRRPGYPLEMAQPQYQQWLEDHLTHNPEDLHLQPAGKIYLAETPWFNISATIIRERLQNGESCDDLLPEPVLTYINQQGLYR</sequence>
<protein>
    <recommendedName>
        <fullName evidence="1">Probable nicotinate-nucleotide adenylyltransferase</fullName>
        <ecNumber evidence="1">2.7.7.18</ecNumber>
    </recommendedName>
    <alternativeName>
        <fullName evidence="1">Deamido-NAD(+) diphosphorylase</fullName>
    </alternativeName>
    <alternativeName>
        <fullName evidence="1">Deamido-NAD(+) pyrophosphorylase</fullName>
    </alternativeName>
    <alternativeName>
        <fullName evidence="1">Nicotinate mononucleotide adenylyltransferase</fullName>
        <shortName evidence="1">NaMN adenylyltransferase</shortName>
    </alternativeName>
</protein>
<comment type="function">
    <text evidence="1">Catalyzes the reversible adenylation of nicotinate mononucleotide (NaMN) to nicotinic acid adenine dinucleotide (NaAD).</text>
</comment>
<comment type="catalytic activity">
    <reaction evidence="1">
        <text>nicotinate beta-D-ribonucleotide + ATP + H(+) = deamido-NAD(+) + diphosphate</text>
        <dbReference type="Rhea" id="RHEA:22860"/>
        <dbReference type="ChEBI" id="CHEBI:15378"/>
        <dbReference type="ChEBI" id="CHEBI:30616"/>
        <dbReference type="ChEBI" id="CHEBI:33019"/>
        <dbReference type="ChEBI" id="CHEBI:57502"/>
        <dbReference type="ChEBI" id="CHEBI:58437"/>
        <dbReference type="EC" id="2.7.7.18"/>
    </reaction>
</comment>
<comment type="pathway">
    <text evidence="1">Cofactor biosynthesis; NAD(+) biosynthesis; deamido-NAD(+) from nicotinate D-ribonucleotide: step 1/1.</text>
</comment>
<comment type="similarity">
    <text evidence="1">Belongs to the NadD family.</text>
</comment>
<dbReference type="EC" id="2.7.7.18" evidence="1"/>
<dbReference type="EMBL" id="CP000034">
    <property type="protein sequence ID" value="ABB60765.1"/>
    <property type="molecule type" value="Genomic_DNA"/>
</dbReference>
<dbReference type="RefSeq" id="WP_000838887.1">
    <property type="nucleotide sequence ID" value="NC_007606.1"/>
</dbReference>
<dbReference type="RefSeq" id="YP_402254.1">
    <property type="nucleotide sequence ID" value="NC_007606.1"/>
</dbReference>
<dbReference type="SMR" id="Q32IU2"/>
<dbReference type="STRING" id="300267.SDY_0561"/>
<dbReference type="EnsemblBacteria" id="ABB60765">
    <property type="protein sequence ID" value="ABB60765"/>
    <property type="gene ID" value="SDY_0561"/>
</dbReference>
<dbReference type="KEGG" id="sdy:SDY_0561"/>
<dbReference type="PATRIC" id="fig|300267.13.peg.663"/>
<dbReference type="HOGENOM" id="CLU_069765_0_0_6"/>
<dbReference type="UniPathway" id="UPA00253">
    <property type="reaction ID" value="UER00332"/>
</dbReference>
<dbReference type="Proteomes" id="UP000002716">
    <property type="component" value="Chromosome"/>
</dbReference>
<dbReference type="GO" id="GO:0005524">
    <property type="term" value="F:ATP binding"/>
    <property type="evidence" value="ECO:0007669"/>
    <property type="project" value="UniProtKB-KW"/>
</dbReference>
<dbReference type="GO" id="GO:0004515">
    <property type="term" value="F:nicotinate-nucleotide adenylyltransferase activity"/>
    <property type="evidence" value="ECO:0007669"/>
    <property type="project" value="UniProtKB-UniRule"/>
</dbReference>
<dbReference type="GO" id="GO:0009435">
    <property type="term" value="P:NAD biosynthetic process"/>
    <property type="evidence" value="ECO:0007669"/>
    <property type="project" value="UniProtKB-UniRule"/>
</dbReference>
<dbReference type="CDD" id="cd02165">
    <property type="entry name" value="NMNAT"/>
    <property type="match status" value="1"/>
</dbReference>
<dbReference type="FunFam" id="3.40.50.620:FF:000039">
    <property type="entry name" value="Probable nicotinate-nucleotide adenylyltransferase"/>
    <property type="match status" value="1"/>
</dbReference>
<dbReference type="Gene3D" id="3.40.50.620">
    <property type="entry name" value="HUPs"/>
    <property type="match status" value="1"/>
</dbReference>
<dbReference type="HAMAP" id="MF_00244">
    <property type="entry name" value="NaMN_adenylyltr"/>
    <property type="match status" value="1"/>
</dbReference>
<dbReference type="InterPro" id="IPR004821">
    <property type="entry name" value="Cyt_trans-like"/>
</dbReference>
<dbReference type="InterPro" id="IPR005248">
    <property type="entry name" value="NadD/NMNAT"/>
</dbReference>
<dbReference type="InterPro" id="IPR014729">
    <property type="entry name" value="Rossmann-like_a/b/a_fold"/>
</dbReference>
<dbReference type="NCBIfam" id="TIGR00125">
    <property type="entry name" value="cyt_tran_rel"/>
    <property type="match status" value="1"/>
</dbReference>
<dbReference type="NCBIfam" id="TIGR00482">
    <property type="entry name" value="nicotinate (nicotinamide) nucleotide adenylyltransferase"/>
    <property type="match status" value="1"/>
</dbReference>
<dbReference type="NCBIfam" id="NF000839">
    <property type="entry name" value="PRK00071.1-1"/>
    <property type="match status" value="1"/>
</dbReference>
<dbReference type="NCBIfam" id="NF000840">
    <property type="entry name" value="PRK00071.1-3"/>
    <property type="match status" value="1"/>
</dbReference>
<dbReference type="PANTHER" id="PTHR39321">
    <property type="entry name" value="NICOTINATE-NUCLEOTIDE ADENYLYLTRANSFERASE-RELATED"/>
    <property type="match status" value="1"/>
</dbReference>
<dbReference type="PANTHER" id="PTHR39321:SF3">
    <property type="entry name" value="PHOSPHOPANTETHEINE ADENYLYLTRANSFERASE"/>
    <property type="match status" value="1"/>
</dbReference>
<dbReference type="Pfam" id="PF01467">
    <property type="entry name" value="CTP_transf_like"/>
    <property type="match status" value="1"/>
</dbReference>
<dbReference type="SUPFAM" id="SSF52374">
    <property type="entry name" value="Nucleotidylyl transferase"/>
    <property type="match status" value="1"/>
</dbReference>